<protein>
    <recommendedName>
        <fullName evidence="1">Cytochrome c-type biogenesis protein CcmE</fullName>
    </recommendedName>
    <alternativeName>
        <fullName evidence="1">Cytochrome c maturation protein E</fullName>
    </alternativeName>
    <alternativeName>
        <fullName evidence="1">Heme chaperone CcmE</fullName>
    </alternativeName>
</protein>
<reference key="1">
    <citation type="submission" date="2006-12" db="EMBL/GenBank/DDBJ databases">
        <title>Complete sequence of Shewanella amazonensis SB2B.</title>
        <authorList>
            <consortium name="US DOE Joint Genome Institute"/>
            <person name="Copeland A."/>
            <person name="Lucas S."/>
            <person name="Lapidus A."/>
            <person name="Barry K."/>
            <person name="Detter J.C."/>
            <person name="Glavina del Rio T."/>
            <person name="Hammon N."/>
            <person name="Israni S."/>
            <person name="Dalin E."/>
            <person name="Tice H."/>
            <person name="Pitluck S."/>
            <person name="Munk A.C."/>
            <person name="Brettin T."/>
            <person name="Bruce D."/>
            <person name="Han C."/>
            <person name="Tapia R."/>
            <person name="Gilna P."/>
            <person name="Schmutz J."/>
            <person name="Larimer F."/>
            <person name="Land M."/>
            <person name="Hauser L."/>
            <person name="Kyrpides N."/>
            <person name="Mikhailova N."/>
            <person name="Fredrickson J."/>
            <person name="Richardson P."/>
        </authorList>
    </citation>
    <scope>NUCLEOTIDE SEQUENCE [LARGE SCALE GENOMIC DNA]</scope>
    <source>
        <strain>ATCC BAA-1098 / SB2B</strain>
    </source>
</reference>
<accession>A1S246</accession>
<gene>
    <name evidence="1" type="primary">ccmE</name>
    <name evidence="1" type="synonym">cycJ</name>
    <name type="ordered locus">Sama_0241</name>
</gene>
<evidence type="ECO:0000255" key="1">
    <source>
        <dbReference type="HAMAP-Rule" id="MF_01959"/>
    </source>
</evidence>
<organism>
    <name type="scientific">Shewanella amazonensis (strain ATCC BAA-1098 / SB2B)</name>
    <dbReference type="NCBI Taxonomy" id="326297"/>
    <lineage>
        <taxon>Bacteria</taxon>
        <taxon>Pseudomonadati</taxon>
        <taxon>Pseudomonadota</taxon>
        <taxon>Gammaproteobacteria</taxon>
        <taxon>Alteromonadales</taxon>
        <taxon>Shewanellaceae</taxon>
        <taxon>Shewanella</taxon>
    </lineage>
</organism>
<comment type="function">
    <text evidence="1">Heme chaperone required for the biogenesis of c-type cytochromes. Transiently binds heme delivered by CcmC and transfers the heme to apo-cytochromes in a process facilitated by CcmF and CcmH.</text>
</comment>
<comment type="subcellular location">
    <subcellularLocation>
        <location evidence="1">Cell inner membrane</location>
        <topology evidence="1">Single-pass type II membrane protein</topology>
        <orientation evidence="1">Periplasmic side</orientation>
    </subcellularLocation>
</comment>
<comment type="similarity">
    <text evidence="1">Belongs to the CcmE/CycJ family.</text>
</comment>
<sequence length="162" mass="17465">MNPRRKKRLALVVGLIGGVAAVASLLLYALNTNLNLFYTPTEIAHGKADTGIKPEVGQRIRVGGMVTVGSMIRDPNSLHVEFAVHDAGGGEVIVTYDDLLPDLFREGQGIVAQGVLTEDGKLQASEVLAKHDENYMPPEVAEAMGKNHEKLEYTETQKGGSR</sequence>
<name>CCME_SHEAM</name>
<keyword id="KW-0997">Cell inner membrane</keyword>
<keyword id="KW-1003">Cell membrane</keyword>
<keyword id="KW-0201">Cytochrome c-type biogenesis</keyword>
<keyword id="KW-0349">Heme</keyword>
<keyword id="KW-0408">Iron</keyword>
<keyword id="KW-0472">Membrane</keyword>
<keyword id="KW-0479">Metal-binding</keyword>
<keyword id="KW-1185">Reference proteome</keyword>
<keyword id="KW-0735">Signal-anchor</keyword>
<keyword id="KW-0812">Transmembrane</keyword>
<keyword id="KW-1133">Transmembrane helix</keyword>
<feature type="chain" id="PRO_1000070851" description="Cytochrome c-type biogenesis protein CcmE">
    <location>
        <begin position="1"/>
        <end position="162"/>
    </location>
</feature>
<feature type="topological domain" description="Cytoplasmic" evidence="1">
    <location>
        <begin position="1"/>
        <end position="8"/>
    </location>
</feature>
<feature type="transmembrane region" description="Helical; Signal-anchor for type II membrane protein" evidence="1">
    <location>
        <begin position="9"/>
        <end position="29"/>
    </location>
</feature>
<feature type="topological domain" description="Periplasmic" evidence="1">
    <location>
        <begin position="30"/>
        <end position="162"/>
    </location>
</feature>
<feature type="binding site" description="covalent" evidence="1">
    <location>
        <position position="131"/>
    </location>
    <ligand>
        <name>heme</name>
        <dbReference type="ChEBI" id="CHEBI:30413"/>
    </ligand>
</feature>
<feature type="binding site" description="axial binding residue" evidence="1">
    <location>
        <position position="135"/>
    </location>
    <ligand>
        <name>heme</name>
        <dbReference type="ChEBI" id="CHEBI:30413"/>
    </ligand>
    <ligandPart>
        <name>Fe</name>
        <dbReference type="ChEBI" id="CHEBI:18248"/>
    </ligandPart>
</feature>
<proteinExistence type="inferred from homology"/>
<dbReference type="EMBL" id="CP000507">
    <property type="protein sequence ID" value="ABL98452.1"/>
    <property type="molecule type" value="Genomic_DNA"/>
</dbReference>
<dbReference type="RefSeq" id="WP_011758362.1">
    <property type="nucleotide sequence ID" value="NC_008700.1"/>
</dbReference>
<dbReference type="SMR" id="A1S246"/>
<dbReference type="STRING" id="326297.Sama_0241"/>
<dbReference type="KEGG" id="saz:Sama_0241"/>
<dbReference type="eggNOG" id="COG2332">
    <property type="taxonomic scope" value="Bacteria"/>
</dbReference>
<dbReference type="HOGENOM" id="CLU_079503_1_0_6"/>
<dbReference type="OrthoDB" id="9793584at2"/>
<dbReference type="Proteomes" id="UP000009175">
    <property type="component" value="Chromosome"/>
</dbReference>
<dbReference type="GO" id="GO:0005886">
    <property type="term" value="C:plasma membrane"/>
    <property type="evidence" value="ECO:0007669"/>
    <property type="project" value="UniProtKB-SubCell"/>
</dbReference>
<dbReference type="GO" id="GO:0020037">
    <property type="term" value="F:heme binding"/>
    <property type="evidence" value="ECO:0007669"/>
    <property type="project" value="InterPro"/>
</dbReference>
<dbReference type="GO" id="GO:0046872">
    <property type="term" value="F:metal ion binding"/>
    <property type="evidence" value="ECO:0007669"/>
    <property type="project" value="UniProtKB-KW"/>
</dbReference>
<dbReference type="GO" id="GO:0017004">
    <property type="term" value="P:cytochrome complex assembly"/>
    <property type="evidence" value="ECO:0007669"/>
    <property type="project" value="UniProtKB-KW"/>
</dbReference>
<dbReference type="FunFam" id="2.40.50.140:FF:000104">
    <property type="entry name" value="Cytochrome c-type biogenesis protein CcmE"/>
    <property type="match status" value="1"/>
</dbReference>
<dbReference type="Gene3D" id="2.40.50.140">
    <property type="entry name" value="Nucleic acid-binding proteins"/>
    <property type="match status" value="1"/>
</dbReference>
<dbReference type="HAMAP" id="MF_01959">
    <property type="entry name" value="CcmE"/>
    <property type="match status" value="1"/>
</dbReference>
<dbReference type="InterPro" id="IPR004329">
    <property type="entry name" value="CcmE"/>
</dbReference>
<dbReference type="InterPro" id="IPR036127">
    <property type="entry name" value="CcmE-like_sf"/>
</dbReference>
<dbReference type="InterPro" id="IPR012340">
    <property type="entry name" value="NA-bd_OB-fold"/>
</dbReference>
<dbReference type="NCBIfam" id="NF009638">
    <property type="entry name" value="PRK13165.1"/>
    <property type="match status" value="1"/>
</dbReference>
<dbReference type="NCBIfam" id="NF009729">
    <property type="entry name" value="PRK13254.1-3"/>
    <property type="match status" value="1"/>
</dbReference>
<dbReference type="PANTHER" id="PTHR34128">
    <property type="entry name" value="CYTOCHROME C-TYPE BIOGENESIS PROTEIN CCME HOMOLOG, MITOCHONDRIAL"/>
    <property type="match status" value="1"/>
</dbReference>
<dbReference type="PANTHER" id="PTHR34128:SF2">
    <property type="entry name" value="CYTOCHROME C-TYPE BIOGENESIS PROTEIN CCME HOMOLOG, MITOCHONDRIAL"/>
    <property type="match status" value="1"/>
</dbReference>
<dbReference type="Pfam" id="PF03100">
    <property type="entry name" value="CcmE"/>
    <property type="match status" value="1"/>
</dbReference>
<dbReference type="SUPFAM" id="SSF82093">
    <property type="entry name" value="Heme chaperone CcmE"/>
    <property type="match status" value="1"/>
</dbReference>